<geneLocation type="non-photosynthetic plastid"/>
<protein>
    <recommendedName>
        <fullName>ATP synthase subunit beta, plastid</fullName>
        <ecNumber>7.1.2.2</ecNumber>
    </recommendedName>
    <alternativeName>
        <fullName>ATP synthase F1 sector subunit beta</fullName>
    </alternativeName>
    <alternativeName>
        <fullName>F-ATPase subunit beta</fullName>
    </alternativeName>
</protein>
<organism>
    <name type="scientific">Prototheca wickerhamii</name>
    <dbReference type="NCBI Taxonomy" id="3111"/>
    <lineage>
        <taxon>Eukaryota</taxon>
        <taxon>Viridiplantae</taxon>
        <taxon>Chlorophyta</taxon>
        <taxon>core chlorophytes</taxon>
        <taxon>Trebouxiophyceae</taxon>
        <taxon>Chlorellales</taxon>
        <taxon>Chlorellaceae</taxon>
        <taxon>Prototheca</taxon>
    </lineage>
</organism>
<dbReference type="EC" id="7.1.2.2"/>
<dbReference type="EMBL" id="AJ245645">
    <property type="protein sequence ID" value="CAB53102.1"/>
    <property type="molecule type" value="Genomic_DNA"/>
</dbReference>
<dbReference type="SMR" id="Q9TJR9"/>
<dbReference type="GO" id="GO:0005739">
    <property type="term" value="C:mitochondrion"/>
    <property type="evidence" value="ECO:0007669"/>
    <property type="project" value="GOC"/>
</dbReference>
<dbReference type="GO" id="GO:0042170">
    <property type="term" value="C:plastid membrane"/>
    <property type="evidence" value="ECO:0007669"/>
    <property type="project" value="UniProtKB-SubCell"/>
</dbReference>
<dbReference type="GO" id="GO:0045259">
    <property type="term" value="C:proton-transporting ATP synthase complex"/>
    <property type="evidence" value="ECO:0007669"/>
    <property type="project" value="UniProtKB-KW"/>
</dbReference>
<dbReference type="GO" id="GO:0005524">
    <property type="term" value="F:ATP binding"/>
    <property type="evidence" value="ECO:0007669"/>
    <property type="project" value="UniProtKB-KW"/>
</dbReference>
<dbReference type="GO" id="GO:0016887">
    <property type="term" value="F:ATP hydrolysis activity"/>
    <property type="evidence" value="ECO:0007669"/>
    <property type="project" value="InterPro"/>
</dbReference>
<dbReference type="GO" id="GO:0046933">
    <property type="term" value="F:proton-transporting ATP synthase activity, rotational mechanism"/>
    <property type="evidence" value="ECO:0007669"/>
    <property type="project" value="InterPro"/>
</dbReference>
<dbReference type="GO" id="GO:0042776">
    <property type="term" value="P:proton motive force-driven mitochondrial ATP synthesis"/>
    <property type="evidence" value="ECO:0007669"/>
    <property type="project" value="TreeGrafter"/>
</dbReference>
<dbReference type="CDD" id="cd18110">
    <property type="entry name" value="ATP-synt_F1_beta_C"/>
    <property type="match status" value="1"/>
</dbReference>
<dbReference type="CDD" id="cd18115">
    <property type="entry name" value="ATP-synt_F1_beta_N"/>
    <property type="match status" value="1"/>
</dbReference>
<dbReference type="CDD" id="cd01133">
    <property type="entry name" value="F1-ATPase_beta_CD"/>
    <property type="match status" value="1"/>
</dbReference>
<dbReference type="FunFam" id="1.10.1140.10:FF:000001">
    <property type="entry name" value="ATP synthase subunit beta"/>
    <property type="match status" value="1"/>
</dbReference>
<dbReference type="FunFam" id="3.40.50.300:FF:000004">
    <property type="entry name" value="ATP synthase subunit beta"/>
    <property type="match status" value="1"/>
</dbReference>
<dbReference type="Gene3D" id="2.40.10.170">
    <property type="match status" value="1"/>
</dbReference>
<dbReference type="Gene3D" id="1.10.1140.10">
    <property type="entry name" value="Bovine Mitochondrial F1-atpase, Atp Synthase Beta Chain, Chain D, domain 3"/>
    <property type="match status" value="1"/>
</dbReference>
<dbReference type="Gene3D" id="3.40.50.300">
    <property type="entry name" value="P-loop containing nucleotide triphosphate hydrolases"/>
    <property type="match status" value="1"/>
</dbReference>
<dbReference type="HAMAP" id="MF_01347">
    <property type="entry name" value="ATP_synth_beta_bact"/>
    <property type="match status" value="1"/>
</dbReference>
<dbReference type="InterPro" id="IPR003593">
    <property type="entry name" value="AAA+_ATPase"/>
</dbReference>
<dbReference type="InterPro" id="IPR055190">
    <property type="entry name" value="ATP-synt_VA_C"/>
</dbReference>
<dbReference type="InterPro" id="IPR005722">
    <property type="entry name" value="ATP_synth_F1_bsu"/>
</dbReference>
<dbReference type="InterPro" id="IPR020003">
    <property type="entry name" value="ATPase_a/bsu_AS"/>
</dbReference>
<dbReference type="InterPro" id="IPR050053">
    <property type="entry name" value="ATPase_alpha/beta_chains"/>
</dbReference>
<dbReference type="InterPro" id="IPR004100">
    <property type="entry name" value="ATPase_F1/V1/A1_a/bsu_N"/>
</dbReference>
<dbReference type="InterPro" id="IPR036121">
    <property type="entry name" value="ATPase_F1/V1/A1_a/bsu_N_sf"/>
</dbReference>
<dbReference type="InterPro" id="IPR000194">
    <property type="entry name" value="ATPase_F1/V1/A1_a/bsu_nucl-bd"/>
</dbReference>
<dbReference type="InterPro" id="IPR024034">
    <property type="entry name" value="ATPase_F1/V1_b/a_C"/>
</dbReference>
<dbReference type="InterPro" id="IPR027417">
    <property type="entry name" value="P-loop_NTPase"/>
</dbReference>
<dbReference type="NCBIfam" id="TIGR01039">
    <property type="entry name" value="atpD"/>
    <property type="match status" value="1"/>
</dbReference>
<dbReference type="PANTHER" id="PTHR15184">
    <property type="entry name" value="ATP SYNTHASE"/>
    <property type="match status" value="1"/>
</dbReference>
<dbReference type="PANTHER" id="PTHR15184:SF71">
    <property type="entry name" value="ATP SYNTHASE SUBUNIT BETA, MITOCHONDRIAL"/>
    <property type="match status" value="1"/>
</dbReference>
<dbReference type="Pfam" id="PF00006">
    <property type="entry name" value="ATP-synt_ab"/>
    <property type="match status" value="1"/>
</dbReference>
<dbReference type="Pfam" id="PF02874">
    <property type="entry name" value="ATP-synt_ab_N"/>
    <property type="match status" value="1"/>
</dbReference>
<dbReference type="Pfam" id="PF22919">
    <property type="entry name" value="ATP-synt_VA_C"/>
    <property type="match status" value="1"/>
</dbReference>
<dbReference type="SMART" id="SM00382">
    <property type="entry name" value="AAA"/>
    <property type="match status" value="1"/>
</dbReference>
<dbReference type="SUPFAM" id="SSF47917">
    <property type="entry name" value="C-terminal domain of alpha and beta subunits of F1 ATP synthase"/>
    <property type="match status" value="1"/>
</dbReference>
<dbReference type="SUPFAM" id="SSF50615">
    <property type="entry name" value="N-terminal domain of alpha and beta subunits of F1 ATP synthase"/>
    <property type="match status" value="1"/>
</dbReference>
<dbReference type="SUPFAM" id="SSF52540">
    <property type="entry name" value="P-loop containing nucleoside triphosphate hydrolases"/>
    <property type="match status" value="1"/>
</dbReference>
<dbReference type="PROSITE" id="PS00152">
    <property type="entry name" value="ATPASE_ALPHA_BETA"/>
    <property type="match status" value="1"/>
</dbReference>
<proteinExistence type="inferred from homology"/>
<gene>
    <name type="primary">atpB</name>
</gene>
<comment type="function">
    <text evidence="1">Produces ATP from ADP in the presence of a proton gradient across the membrane. The catalytic sites are hosted primarily by the beta subunits (By similarity).</text>
</comment>
<comment type="catalytic activity">
    <reaction>
        <text>ATP + H2O + 4 H(+)(in) = ADP + phosphate + 5 H(+)(out)</text>
        <dbReference type="Rhea" id="RHEA:57720"/>
        <dbReference type="ChEBI" id="CHEBI:15377"/>
        <dbReference type="ChEBI" id="CHEBI:15378"/>
        <dbReference type="ChEBI" id="CHEBI:30616"/>
        <dbReference type="ChEBI" id="CHEBI:43474"/>
        <dbReference type="ChEBI" id="CHEBI:456216"/>
        <dbReference type="EC" id="7.1.2.2"/>
    </reaction>
</comment>
<comment type="subunit">
    <text evidence="1">F-type ATPases have 2 components, CF(1) - the catalytic core - and CF(0) - the membrane proton channel. CF(1) has five subunits: alpha(3), beta(3), gamma(1), delta(1), epsilon(1). CF(0) has four main subunits: a(1), b(1), b'(1) and c(9-12) (By similarity).</text>
</comment>
<comment type="subcellular location">
    <subcellularLocation>
        <location evidence="1">Plastid membrane</location>
        <topology evidence="1">Peripheral membrane protein</topology>
    </subcellularLocation>
</comment>
<comment type="similarity">
    <text evidence="2">Belongs to the ATPase alpha/beta chains family.</text>
</comment>
<name>ATPB_PROWI</name>
<accession>Q9TJR9</accession>
<sequence length="481" mass="52331">MTVFIETQNFGTITRIIGPVLDITFTGNKMPKIYHALSIIDKNSEGLDIFIVCEVQQLLGDHCVRAISMNATDGLKRGMTVFDTGDVLKVPVGRSTLGRIFNVLGETIDNLGPADTSNQLPIHRSAPKFIDLDTKLSIFETGIKVVDLLAPYRRGGKIGLFGGAGVGKTVLIMELINNIAKTHGGVSVFGGVGERTREGNDLYMEMKESGIINEALISESKVALVYGQMNEPPGARMRVGLTALTMAEYFRDVSSQDVLLFIDNIFRFLQAGSEVSALLGRLPSAVGYQPTLASEMGALQERITSTKDGSITSIQAVYIPADDLTDPAPATTFAHLDATTVLSRGLASKGIYPAVDPLESTSTMLQPWIVGEEHYKCSQNVKQTLQRYKELQDIIAILGLDELSPDDRLIVARARKIERFLSQPFFVAELFTGLPGKYVSLAKTIQGFNLILSGDLDALSEQAFYLVGDIEEAISKGFLKK</sequence>
<feature type="chain" id="PRO_0000254516" description="ATP synthase subunit beta, plastid">
    <location>
        <begin position="1"/>
        <end position="481"/>
    </location>
</feature>
<feature type="binding site" evidence="1">
    <location>
        <begin position="162"/>
        <end position="169"/>
    </location>
    <ligand>
        <name>ATP</name>
        <dbReference type="ChEBI" id="CHEBI:30616"/>
    </ligand>
</feature>
<keyword id="KW-0066">ATP synthesis</keyword>
<keyword id="KW-0067">ATP-binding</keyword>
<keyword id="KW-0139">CF(1)</keyword>
<keyword id="KW-0375">Hydrogen ion transport</keyword>
<keyword id="KW-0406">Ion transport</keyword>
<keyword id="KW-0472">Membrane</keyword>
<keyword id="KW-0547">Nucleotide-binding</keyword>
<keyword id="KW-0934">Plastid</keyword>
<keyword id="KW-1278">Translocase</keyword>
<keyword id="KW-0813">Transport</keyword>
<evidence type="ECO:0000250" key="1"/>
<evidence type="ECO:0000305" key="2"/>
<reference key="1">
    <citation type="journal article" date="2002" name="Mol. Genet. Genomics">
        <title>The genes encoding subunits of ATP synthase are conserved in the reduced plastid genome of the heterotrophic alga Prototheca wickerhamii.</title>
        <authorList>
            <person name="Knauf U."/>
            <person name="Hachtel W."/>
        </authorList>
    </citation>
    <scope>NUCLEOTIDE SEQUENCE [GENOMIC DNA]</scope>
    <scope>TRANSCRIPT DETECTION</scope>
    <source>
        <strain>263-11</strain>
    </source>
</reference>